<evidence type="ECO:0000255" key="1">
    <source>
        <dbReference type="HAMAP-Rule" id="MF_00515"/>
    </source>
</evidence>
<reference key="1">
    <citation type="submission" date="2007-08" db="EMBL/GenBank/DDBJ databases">
        <authorList>
            <consortium name="The Citrobacter koseri Genome Sequencing Project"/>
            <person name="McClelland M."/>
            <person name="Sanderson E.K."/>
            <person name="Porwollik S."/>
            <person name="Spieth J."/>
            <person name="Clifton W.S."/>
            <person name="Latreille P."/>
            <person name="Courtney L."/>
            <person name="Wang C."/>
            <person name="Pepin K."/>
            <person name="Bhonagiri V."/>
            <person name="Nash W."/>
            <person name="Johnson M."/>
            <person name="Thiruvilangam P."/>
            <person name="Wilson R."/>
        </authorList>
    </citation>
    <scope>NUCLEOTIDE SEQUENCE [LARGE SCALE GENOMIC DNA]</scope>
    <source>
        <strain>ATCC BAA-895 / CDC 4225-83 / SGSC4696</strain>
    </source>
</reference>
<feature type="chain" id="PRO_1000050792" description="N-methyl-L-tryptophan oxidase">
    <location>
        <begin position="1"/>
        <end position="372"/>
    </location>
</feature>
<feature type="binding site" evidence="1">
    <location>
        <begin position="4"/>
        <end position="34"/>
    </location>
    <ligand>
        <name>FAD</name>
        <dbReference type="ChEBI" id="CHEBI:57692"/>
    </ligand>
</feature>
<feature type="modified residue" description="S-8alpha-FAD cysteine" evidence="1">
    <location>
        <position position="307"/>
    </location>
</feature>
<organism>
    <name type="scientific">Citrobacter koseri (strain ATCC BAA-895 / CDC 4225-83 / SGSC4696)</name>
    <dbReference type="NCBI Taxonomy" id="290338"/>
    <lineage>
        <taxon>Bacteria</taxon>
        <taxon>Pseudomonadati</taxon>
        <taxon>Pseudomonadota</taxon>
        <taxon>Gammaproteobacteria</taxon>
        <taxon>Enterobacterales</taxon>
        <taxon>Enterobacteriaceae</taxon>
        <taxon>Citrobacter</taxon>
    </lineage>
</organism>
<proteinExistence type="inferred from homology"/>
<dbReference type="EC" id="1.5.3.-" evidence="1"/>
<dbReference type="EMBL" id="CP000822">
    <property type="protein sequence ID" value="ABV13132.1"/>
    <property type="molecule type" value="Genomic_DNA"/>
</dbReference>
<dbReference type="RefSeq" id="WP_012132868.1">
    <property type="nucleotide sequence ID" value="NC_009792.1"/>
</dbReference>
<dbReference type="SMR" id="A8AI19"/>
<dbReference type="STRING" id="290338.CKO_02006"/>
<dbReference type="GeneID" id="45135973"/>
<dbReference type="KEGG" id="cko:CKO_02006"/>
<dbReference type="HOGENOM" id="CLU_007884_2_1_6"/>
<dbReference type="OrthoDB" id="9806257at2"/>
<dbReference type="Proteomes" id="UP000008148">
    <property type="component" value="Chromosome"/>
</dbReference>
<dbReference type="GO" id="GO:0005829">
    <property type="term" value="C:cytosol"/>
    <property type="evidence" value="ECO:0007669"/>
    <property type="project" value="TreeGrafter"/>
</dbReference>
<dbReference type="GO" id="GO:0050660">
    <property type="term" value="F:flavin adenine dinucleotide binding"/>
    <property type="evidence" value="ECO:0007669"/>
    <property type="project" value="InterPro"/>
</dbReference>
<dbReference type="GO" id="GO:0050131">
    <property type="term" value="F:N-methyl-L-amino-acid oxidase activity"/>
    <property type="evidence" value="ECO:0007669"/>
    <property type="project" value="InterPro"/>
</dbReference>
<dbReference type="GO" id="GO:0008115">
    <property type="term" value="F:sarcosine oxidase activity"/>
    <property type="evidence" value="ECO:0007669"/>
    <property type="project" value="TreeGrafter"/>
</dbReference>
<dbReference type="Gene3D" id="3.30.9.10">
    <property type="entry name" value="D-Amino Acid Oxidase, subunit A, domain 2"/>
    <property type="match status" value="1"/>
</dbReference>
<dbReference type="Gene3D" id="3.50.50.60">
    <property type="entry name" value="FAD/NAD(P)-binding domain"/>
    <property type="match status" value="1"/>
</dbReference>
<dbReference type="HAMAP" id="MF_00515">
    <property type="entry name" value="MTOX"/>
    <property type="match status" value="1"/>
</dbReference>
<dbReference type="InterPro" id="IPR006076">
    <property type="entry name" value="FAD-dep_OxRdtase"/>
</dbReference>
<dbReference type="InterPro" id="IPR036188">
    <property type="entry name" value="FAD/NAD-bd_sf"/>
</dbReference>
<dbReference type="InterPro" id="IPR023493">
    <property type="entry name" value="Me_Trp_Oxase_MTOX"/>
</dbReference>
<dbReference type="InterPro" id="IPR045170">
    <property type="entry name" value="MTOX"/>
</dbReference>
<dbReference type="NCBIfam" id="NF008425">
    <property type="entry name" value="PRK11259.1"/>
    <property type="match status" value="1"/>
</dbReference>
<dbReference type="PANTHER" id="PTHR10961:SF7">
    <property type="entry name" value="FAD DEPENDENT OXIDOREDUCTASE DOMAIN-CONTAINING PROTEIN"/>
    <property type="match status" value="1"/>
</dbReference>
<dbReference type="PANTHER" id="PTHR10961">
    <property type="entry name" value="PEROXISOMAL SARCOSINE OXIDASE"/>
    <property type="match status" value="1"/>
</dbReference>
<dbReference type="Pfam" id="PF01266">
    <property type="entry name" value="DAO"/>
    <property type="match status" value="1"/>
</dbReference>
<dbReference type="SUPFAM" id="SSF54373">
    <property type="entry name" value="FAD-linked reductases, C-terminal domain"/>
    <property type="match status" value="1"/>
</dbReference>
<dbReference type="SUPFAM" id="SSF51905">
    <property type="entry name" value="FAD/NAD(P)-binding domain"/>
    <property type="match status" value="1"/>
</dbReference>
<keyword id="KW-0274">FAD</keyword>
<keyword id="KW-0285">Flavoprotein</keyword>
<keyword id="KW-0560">Oxidoreductase</keyword>
<keyword id="KW-1185">Reference proteome</keyword>
<gene>
    <name evidence="1" type="primary">solA</name>
    <name type="ordered locus">CKO_02006</name>
</gene>
<protein>
    <recommendedName>
        <fullName evidence="1">N-methyl-L-tryptophan oxidase</fullName>
        <shortName evidence="1">MTOX</shortName>
        <ecNumber evidence="1">1.5.3.-</ecNumber>
    </recommendedName>
</protein>
<accession>A8AI19</accession>
<name>MTOX_CITK8</name>
<sequence length="372" mass="40658">MKYDLIIIGSGSVGAAAGYYATRAGLKVLMTDAHMPPHQQGSHHGDTRLIRHAYGEGEKYVPLVLRAQTLWEELSTHNEDPIFVRSGVINLGPADSPFLANVAHSAQQWQLNVEQLDAAAIMARWPEIRVPDNYIGLFEMDSGFLRSELAIKTWVRLAEEAGCAQLFNCPVTALHHDNDGVTVETADGEYRAKKVLISAGTWVQALVPELPIQPVRKVFAWYQADGRYSMKNNFPAFTGELPNGDQYYGFPAENDALKIGKHNGGQLIHSPEERKPFAAVASDGSEAFPFLRTILPGIGCCLNGAACTYDNSPDEDFIIDTLPGHDNTLIVTGLSGHGFKFASVLGEIAADFAQGKSPAFDLTPFKLNRFTQ</sequence>
<comment type="function">
    <text evidence="1">Catalyzes the oxidative demethylation of N-methyl-L-tryptophan.</text>
</comment>
<comment type="catalytic activity">
    <reaction evidence="1">
        <text>N(alpha)-methyl-L-tryptophan + O2 + H2O = L-tryptophan + formaldehyde + H2O2</text>
        <dbReference type="Rhea" id="RHEA:28006"/>
        <dbReference type="ChEBI" id="CHEBI:15377"/>
        <dbReference type="ChEBI" id="CHEBI:15379"/>
        <dbReference type="ChEBI" id="CHEBI:16240"/>
        <dbReference type="ChEBI" id="CHEBI:16842"/>
        <dbReference type="ChEBI" id="CHEBI:57283"/>
        <dbReference type="ChEBI" id="CHEBI:57912"/>
    </reaction>
</comment>
<comment type="cofactor">
    <cofactor evidence="1">
        <name>FAD</name>
        <dbReference type="ChEBI" id="CHEBI:57692"/>
    </cofactor>
    <text evidence="1">Binds 1 FAD per subunit.</text>
</comment>
<comment type="subunit">
    <text evidence="1">Monomer.</text>
</comment>
<comment type="similarity">
    <text evidence="1">Belongs to the MSOX/MTOX family. MTOX subfamily.</text>
</comment>